<keyword id="KW-0025">Alternative splicing</keyword>
<keyword id="KW-1003">Cell membrane</keyword>
<keyword id="KW-0966">Cell projection</keyword>
<keyword id="KW-0407">Ion channel</keyword>
<keyword id="KW-0406">Ion transport</keyword>
<keyword id="KW-0472">Membrane</keyword>
<keyword id="KW-0479">Metal-binding</keyword>
<keyword id="KW-0597">Phosphoprotein</keyword>
<keyword id="KW-0630">Potassium</keyword>
<keyword id="KW-0631">Potassium channel</keyword>
<keyword id="KW-0633">Potassium transport</keyword>
<keyword id="KW-1185">Reference proteome</keyword>
<keyword id="KW-0812">Transmembrane</keyword>
<keyword id="KW-1133">Transmembrane helix</keyword>
<keyword id="KW-0813">Transport</keyword>
<keyword id="KW-0851">Voltage-gated channel</keyword>
<keyword id="KW-0862">Zinc</keyword>
<protein>
    <recommendedName>
        <fullName evidence="13">A-type voltage-gated potassium channel KCND3</fullName>
    </recommendedName>
    <alternativeName>
        <fullName>Potassium voltage-gated channel subfamily D member 3</fullName>
    </alternativeName>
    <alternativeName>
        <fullName>Voltage-gated potassium channel subunit Kv4.3</fullName>
    </alternativeName>
</protein>
<gene>
    <name evidence="14" type="primary">Kcnd3</name>
</gene>
<dbReference type="EMBL" id="AF107781">
    <property type="protein sequence ID" value="AAD16973.1"/>
    <property type="molecule type" value="mRNA"/>
</dbReference>
<dbReference type="EMBL" id="AF107782">
    <property type="protein sequence ID" value="AAD16974.1"/>
    <property type="molecule type" value="mRNA"/>
</dbReference>
<dbReference type="EMBL" id="AK033962">
    <property type="protein sequence ID" value="BAC28529.1"/>
    <property type="molecule type" value="mRNA"/>
</dbReference>
<dbReference type="CCDS" id="CCDS17708.1">
    <molecule id="Q9Z0V1-2"/>
</dbReference>
<dbReference type="CCDS" id="CCDS17709.1">
    <molecule id="Q9Z0V1-1"/>
</dbReference>
<dbReference type="RefSeq" id="NP_001034436.1">
    <molecule id="Q9Z0V1-2"/>
    <property type="nucleotide sequence ID" value="NM_001039347.2"/>
</dbReference>
<dbReference type="RefSeq" id="NP_064315.1">
    <molecule id="Q9Z0V1-1"/>
    <property type="nucleotide sequence ID" value="NM_019931.2"/>
</dbReference>
<dbReference type="RefSeq" id="XP_006501818.1">
    <property type="nucleotide sequence ID" value="XM_006501755.3"/>
</dbReference>
<dbReference type="RefSeq" id="XP_006501819.1">
    <property type="nucleotide sequence ID" value="XM_006501756.3"/>
</dbReference>
<dbReference type="RefSeq" id="XP_030108559.1">
    <molecule id="Q9Z0V1-1"/>
    <property type="nucleotide sequence ID" value="XM_030252699.2"/>
</dbReference>
<dbReference type="SMR" id="Q9Z0V1"/>
<dbReference type="BioGRID" id="208049">
    <property type="interactions" value="7"/>
</dbReference>
<dbReference type="ComplexPortal" id="CPX-3262">
    <property type="entry name" value="Kv4.3-KChIP1 channel complex"/>
</dbReference>
<dbReference type="FunCoup" id="Q9Z0V1">
    <property type="interactions" value="314"/>
</dbReference>
<dbReference type="STRING" id="10090.ENSMUSP00000113436"/>
<dbReference type="DrugCentral" id="Q9Z0V1"/>
<dbReference type="GuidetoPHARMACOLOGY" id="554"/>
<dbReference type="iPTMnet" id="Q9Z0V1"/>
<dbReference type="PhosphoSitePlus" id="Q9Z0V1"/>
<dbReference type="SwissPalm" id="Q9Z0V1"/>
<dbReference type="PaxDb" id="10090-ENSMUSP00000096357"/>
<dbReference type="PeptideAtlas" id="Q9Z0V1"/>
<dbReference type="ProteomicsDB" id="263492">
    <molecule id="Q9Z0V1-1"/>
</dbReference>
<dbReference type="ProteomicsDB" id="263493">
    <molecule id="Q9Z0V1-2"/>
</dbReference>
<dbReference type="ProteomicsDB" id="263494">
    <molecule id="Q9Z0V1-3"/>
</dbReference>
<dbReference type="ABCD" id="Q9Z0V1">
    <property type="antibodies" value="2 sequenced antibodies"/>
</dbReference>
<dbReference type="Antibodypedia" id="20128">
    <property type="antibodies" value="211 antibodies from 30 providers"/>
</dbReference>
<dbReference type="DNASU" id="56543"/>
<dbReference type="Ensembl" id="ENSMUST00000079169.5">
    <molecule id="Q9Z0V1-1"/>
    <property type="protein sequence ID" value="ENSMUSP00000078169.5"/>
    <property type="gene ID" value="ENSMUSG00000040896.17"/>
</dbReference>
<dbReference type="Ensembl" id="ENSMUST00000098761.10">
    <molecule id="Q9Z0V1-2"/>
    <property type="protein sequence ID" value="ENSMUSP00000096357.4"/>
    <property type="gene ID" value="ENSMUSG00000040896.17"/>
</dbReference>
<dbReference type="Ensembl" id="ENSMUST00000118360.8">
    <molecule id="Q9Z0V1-1"/>
    <property type="protein sequence ID" value="ENSMUSP00000113436.2"/>
    <property type="gene ID" value="ENSMUSG00000040896.17"/>
</dbReference>
<dbReference type="GeneID" id="56543"/>
<dbReference type="KEGG" id="mmu:56543"/>
<dbReference type="UCSC" id="uc008qux.1">
    <molecule id="Q9Z0V1-3"/>
    <property type="organism name" value="mouse"/>
</dbReference>
<dbReference type="UCSC" id="uc008quz.1">
    <molecule id="Q9Z0V1-1"/>
    <property type="organism name" value="mouse"/>
</dbReference>
<dbReference type="AGR" id="MGI:1928743"/>
<dbReference type="CTD" id="3752"/>
<dbReference type="MGI" id="MGI:1928743">
    <property type="gene designation" value="Kcnd3"/>
</dbReference>
<dbReference type="VEuPathDB" id="HostDB:ENSMUSG00000040896"/>
<dbReference type="eggNOG" id="KOG4390">
    <property type="taxonomic scope" value="Eukaryota"/>
</dbReference>
<dbReference type="GeneTree" id="ENSGT00940000155343"/>
<dbReference type="HOGENOM" id="CLU_011722_9_1_1"/>
<dbReference type="InParanoid" id="Q9Z0V1"/>
<dbReference type="OMA" id="SQRYQNY"/>
<dbReference type="OrthoDB" id="433309at2759"/>
<dbReference type="PhylomeDB" id="Q9Z0V1"/>
<dbReference type="TreeFam" id="TF313103"/>
<dbReference type="Reactome" id="R-MMU-1296072">
    <property type="pathway name" value="Voltage gated Potassium channels"/>
</dbReference>
<dbReference type="Reactome" id="R-MMU-5576894">
    <property type="pathway name" value="Phase 1 - inactivation of fast Na+ channels"/>
</dbReference>
<dbReference type="BioGRID-ORCS" id="56543">
    <property type="hits" value="2 hits in 77 CRISPR screens"/>
</dbReference>
<dbReference type="ChiTaRS" id="Kcnd3">
    <property type="organism name" value="mouse"/>
</dbReference>
<dbReference type="PRO" id="PR:Q9Z0V1"/>
<dbReference type="Proteomes" id="UP000000589">
    <property type="component" value="Chromosome 3"/>
</dbReference>
<dbReference type="RNAct" id="Q9Z0V1">
    <property type="molecule type" value="protein"/>
</dbReference>
<dbReference type="Bgee" id="ENSMUSG00000040896">
    <property type="expression patterns" value="Expressed in substantia nigra and 159 other cell types or tissues"/>
</dbReference>
<dbReference type="ExpressionAtlas" id="Q9Z0V1">
    <property type="expression patterns" value="baseline and differential"/>
</dbReference>
<dbReference type="GO" id="GO:0030425">
    <property type="term" value="C:dendrite"/>
    <property type="evidence" value="ECO:0007669"/>
    <property type="project" value="UniProtKB-SubCell"/>
</dbReference>
<dbReference type="GO" id="GO:0098982">
    <property type="term" value="C:GABA-ergic synapse"/>
    <property type="evidence" value="ECO:0000314"/>
    <property type="project" value="SynGO"/>
</dbReference>
<dbReference type="GO" id="GO:0071196">
    <property type="term" value="C:Kv4.3-KChIP1 channel complex"/>
    <property type="evidence" value="ECO:0000266"/>
    <property type="project" value="ComplexPortal"/>
</dbReference>
<dbReference type="GO" id="GO:0016020">
    <property type="term" value="C:membrane"/>
    <property type="evidence" value="ECO:0000314"/>
    <property type="project" value="MGI"/>
</dbReference>
<dbReference type="GO" id="GO:0099634">
    <property type="term" value="C:postsynaptic specialization membrane"/>
    <property type="evidence" value="ECO:0000314"/>
    <property type="project" value="SynGO"/>
</dbReference>
<dbReference type="GO" id="GO:0042383">
    <property type="term" value="C:sarcolemma"/>
    <property type="evidence" value="ECO:0007669"/>
    <property type="project" value="UniProtKB-SubCell"/>
</dbReference>
<dbReference type="GO" id="GO:0008076">
    <property type="term" value="C:voltage-gated potassium channel complex"/>
    <property type="evidence" value="ECO:0000314"/>
    <property type="project" value="UniProtKB"/>
</dbReference>
<dbReference type="GO" id="GO:0005250">
    <property type="term" value="F:A-type (transient outward) potassium channel activity"/>
    <property type="evidence" value="ECO:0007669"/>
    <property type="project" value="Ensembl"/>
</dbReference>
<dbReference type="GO" id="GO:0046872">
    <property type="term" value="F:metal ion binding"/>
    <property type="evidence" value="ECO:0007669"/>
    <property type="project" value="UniProtKB-KW"/>
</dbReference>
<dbReference type="GO" id="GO:0086008">
    <property type="term" value="F:voltage-gated potassium channel activity involved in cardiac muscle cell action potential repolarization"/>
    <property type="evidence" value="ECO:0000315"/>
    <property type="project" value="MGI"/>
</dbReference>
<dbReference type="GO" id="GO:1902282">
    <property type="term" value="F:voltage-gated potassium channel activity involved in ventricular cardiac muscle cell action potential repolarization"/>
    <property type="evidence" value="ECO:0007669"/>
    <property type="project" value="Ensembl"/>
</dbReference>
<dbReference type="GO" id="GO:0086002">
    <property type="term" value="P:cardiac muscle cell action potential involved in contraction"/>
    <property type="evidence" value="ECO:0000315"/>
    <property type="project" value="MGI"/>
</dbReference>
<dbReference type="GO" id="GO:0086065">
    <property type="term" value="P:cell communication involved in cardiac conduction"/>
    <property type="evidence" value="ECO:0000315"/>
    <property type="project" value="MGI"/>
</dbReference>
<dbReference type="GO" id="GO:0007268">
    <property type="term" value="P:chemical synaptic transmission"/>
    <property type="evidence" value="ECO:0000303"/>
    <property type="project" value="ComplexPortal"/>
</dbReference>
<dbReference type="GO" id="GO:0051649">
    <property type="term" value="P:establishment of localization in cell"/>
    <property type="evidence" value="ECO:0000315"/>
    <property type="project" value="MGI"/>
</dbReference>
<dbReference type="GO" id="GO:0086009">
    <property type="term" value="P:membrane repolarization"/>
    <property type="evidence" value="ECO:0000303"/>
    <property type="project" value="ComplexPortal"/>
</dbReference>
<dbReference type="GO" id="GO:0006936">
    <property type="term" value="P:muscle contraction"/>
    <property type="evidence" value="ECO:0000303"/>
    <property type="project" value="ComplexPortal"/>
</dbReference>
<dbReference type="GO" id="GO:0097623">
    <property type="term" value="P:potassium ion export across plasma membrane"/>
    <property type="evidence" value="ECO:0000315"/>
    <property type="project" value="MGI"/>
</dbReference>
<dbReference type="GO" id="GO:0051260">
    <property type="term" value="P:protein homooligomerization"/>
    <property type="evidence" value="ECO:0007669"/>
    <property type="project" value="InterPro"/>
</dbReference>
<dbReference type="GO" id="GO:0051262">
    <property type="term" value="P:protein tetramerization"/>
    <property type="evidence" value="ECO:0007669"/>
    <property type="project" value="Ensembl"/>
</dbReference>
<dbReference type="GO" id="GO:0008016">
    <property type="term" value="P:regulation of heart contraction"/>
    <property type="evidence" value="ECO:0000303"/>
    <property type="project" value="ComplexPortal"/>
</dbReference>
<dbReference type="GO" id="GO:0086091">
    <property type="term" value="P:regulation of heart rate by cardiac conduction"/>
    <property type="evidence" value="ECO:0000315"/>
    <property type="project" value="MGI"/>
</dbReference>
<dbReference type="CDD" id="cd18419">
    <property type="entry name" value="BTB_POZ_KCND3"/>
    <property type="match status" value="1"/>
</dbReference>
<dbReference type="FunFam" id="1.10.287.70:FF:000073">
    <property type="entry name" value="Potassium voltage-gated channel subfamily D member 2"/>
    <property type="match status" value="1"/>
</dbReference>
<dbReference type="FunFam" id="1.10.287.70:FF:000111">
    <property type="entry name" value="Potassium voltage-gated channel subfamily D member 3"/>
    <property type="match status" value="1"/>
</dbReference>
<dbReference type="FunFam" id="1.20.120.350:FF:000016">
    <property type="entry name" value="Potassium voltage-gated channel subfamily D member 3"/>
    <property type="match status" value="1"/>
</dbReference>
<dbReference type="FunFam" id="3.30.710.10:FF:000004">
    <property type="entry name" value="Potassium voltage-gated channel subfamily D member 3"/>
    <property type="match status" value="1"/>
</dbReference>
<dbReference type="Gene3D" id="1.10.287.70">
    <property type="match status" value="1"/>
</dbReference>
<dbReference type="Gene3D" id="3.30.710.10">
    <property type="entry name" value="Potassium Channel Kv1.1, Chain A"/>
    <property type="match status" value="1"/>
</dbReference>
<dbReference type="Gene3D" id="1.20.120.350">
    <property type="entry name" value="Voltage-gated potassium channels. Chain C"/>
    <property type="match status" value="1"/>
</dbReference>
<dbReference type="InterPro" id="IPR000210">
    <property type="entry name" value="BTB/POZ_dom"/>
</dbReference>
<dbReference type="InterPro" id="IPR005821">
    <property type="entry name" value="Ion_trans_dom"/>
</dbReference>
<dbReference type="InterPro" id="IPR003968">
    <property type="entry name" value="K_chnl_volt-dep_Kv"/>
</dbReference>
<dbReference type="InterPro" id="IPR003975">
    <property type="entry name" value="K_chnl_volt-dep_Kv4"/>
</dbReference>
<dbReference type="InterPro" id="IPR004056">
    <property type="entry name" value="K_chnl_volt-dep_Kv4.3"/>
</dbReference>
<dbReference type="InterPro" id="IPR024587">
    <property type="entry name" value="K_chnl_volt-dep_Kv4_C"/>
</dbReference>
<dbReference type="InterPro" id="IPR021645">
    <property type="entry name" value="Shal-type_N"/>
</dbReference>
<dbReference type="InterPro" id="IPR011333">
    <property type="entry name" value="SKP1/BTB/POZ_sf"/>
</dbReference>
<dbReference type="InterPro" id="IPR003131">
    <property type="entry name" value="T1-type_BTB"/>
</dbReference>
<dbReference type="InterPro" id="IPR028325">
    <property type="entry name" value="VG_K_chnl"/>
</dbReference>
<dbReference type="InterPro" id="IPR027359">
    <property type="entry name" value="Volt_channel_dom_sf"/>
</dbReference>
<dbReference type="PANTHER" id="PTHR11537:SF182">
    <property type="entry name" value="POTASSIUM VOLTAGE-GATED CHANNEL SUBFAMILY D MEMBER 3"/>
    <property type="match status" value="1"/>
</dbReference>
<dbReference type="PANTHER" id="PTHR11537">
    <property type="entry name" value="VOLTAGE-GATED POTASSIUM CHANNEL"/>
    <property type="match status" value="1"/>
</dbReference>
<dbReference type="Pfam" id="PF02214">
    <property type="entry name" value="BTB_2"/>
    <property type="match status" value="1"/>
</dbReference>
<dbReference type="Pfam" id="PF11879">
    <property type="entry name" value="DUF3399"/>
    <property type="match status" value="1"/>
</dbReference>
<dbReference type="Pfam" id="PF00520">
    <property type="entry name" value="Ion_trans"/>
    <property type="match status" value="1"/>
</dbReference>
<dbReference type="Pfam" id="PF11601">
    <property type="entry name" value="Shal-type"/>
    <property type="match status" value="1"/>
</dbReference>
<dbReference type="PRINTS" id="PR00169">
    <property type="entry name" value="KCHANNEL"/>
</dbReference>
<dbReference type="PRINTS" id="PR01518">
    <property type="entry name" value="KV43CHANNEL"/>
</dbReference>
<dbReference type="PRINTS" id="PR01491">
    <property type="entry name" value="KVCHANNEL"/>
</dbReference>
<dbReference type="PRINTS" id="PR01497">
    <property type="entry name" value="SHALCHANNEL"/>
</dbReference>
<dbReference type="SMART" id="SM00225">
    <property type="entry name" value="BTB"/>
    <property type="match status" value="1"/>
</dbReference>
<dbReference type="SUPFAM" id="SSF54695">
    <property type="entry name" value="POZ domain"/>
    <property type="match status" value="1"/>
</dbReference>
<dbReference type="SUPFAM" id="SSF81324">
    <property type="entry name" value="Voltage-gated potassium channels"/>
    <property type="match status" value="1"/>
</dbReference>
<reference key="1">
    <citation type="submission" date="1998-11" db="EMBL/GenBank/DDBJ databases">
        <title>Cloning and functional characterization of mouse heart K+ channel alpha subunits, Kv1.5, Kv4.2 and Kv4.3.</title>
        <authorList>
            <person name="Tanaka H."/>
            <person name="Janzen K."/>
            <person name="Winkfein R.J."/>
            <person name="Fiset C."/>
            <person name="Clark R.B."/>
            <person name="Giles W.R."/>
        </authorList>
    </citation>
    <scope>NUCLEOTIDE SEQUENCE [MRNA] (ISOFORMS 1 AND 2)</scope>
    <source>
        <strain>Swiss Webster</strain>
        <tissue>Heart ventricle</tissue>
    </source>
</reference>
<reference key="2">
    <citation type="journal article" date="2005" name="Science">
        <title>The transcriptional landscape of the mammalian genome.</title>
        <authorList>
            <person name="Carninci P."/>
            <person name="Kasukawa T."/>
            <person name="Katayama S."/>
            <person name="Gough J."/>
            <person name="Frith M.C."/>
            <person name="Maeda N."/>
            <person name="Oyama R."/>
            <person name="Ravasi T."/>
            <person name="Lenhard B."/>
            <person name="Wells C."/>
            <person name="Kodzius R."/>
            <person name="Shimokawa K."/>
            <person name="Bajic V.B."/>
            <person name="Brenner S.E."/>
            <person name="Batalov S."/>
            <person name="Forrest A.R."/>
            <person name="Zavolan M."/>
            <person name="Davis M.J."/>
            <person name="Wilming L.G."/>
            <person name="Aidinis V."/>
            <person name="Allen J.E."/>
            <person name="Ambesi-Impiombato A."/>
            <person name="Apweiler R."/>
            <person name="Aturaliya R.N."/>
            <person name="Bailey T.L."/>
            <person name="Bansal M."/>
            <person name="Baxter L."/>
            <person name="Beisel K.W."/>
            <person name="Bersano T."/>
            <person name="Bono H."/>
            <person name="Chalk A.M."/>
            <person name="Chiu K.P."/>
            <person name="Choudhary V."/>
            <person name="Christoffels A."/>
            <person name="Clutterbuck D.R."/>
            <person name="Crowe M.L."/>
            <person name="Dalla E."/>
            <person name="Dalrymple B.P."/>
            <person name="de Bono B."/>
            <person name="Della Gatta G."/>
            <person name="di Bernardo D."/>
            <person name="Down T."/>
            <person name="Engstrom P."/>
            <person name="Fagiolini M."/>
            <person name="Faulkner G."/>
            <person name="Fletcher C.F."/>
            <person name="Fukushima T."/>
            <person name="Furuno M."/>
            <person name="Futaki S."/>
            <person name="Gariboldi M."/>
            <person name="Georgii-Hemming P."/>
            <person name="Gingeras T.R."/>
            <person name="Gojobori T."/>
            <person name="Green R.E."/>
            <person name="Gustincich S."/>
            <person name="Harbers M."/>
            <person name="Hayashi Y."/>
            <person name="Hensch T.K."/>
            <person name="Hirokawa N."/>
            <person name="Hill D."/>
            <person name="Huminiecki L."/>
            <person name="Iacono M."/>
            <person name="Ikeo K."/>
            <person name="Iwama A."/>
            <person name="Ishikawa T."/>
            <person name="Jakt M."/>
            <person name="Kanapin A."/>
            <person name="Katoh M."/>
            <person name="Kawasawa Y."/>
            <person name="Kelso J."/>
            <person name="Kitamura H."/>
            <person name="Kitano H."/>
            <person name="Kollias G."/>
            <person name="Krishnan S.P."/>
            <person name="Kruger A."/>
            <person name="Kummerfeld S.K."/>
            <person name="Kurochkin I.V."/>
            <person name="Lareau L.F."/>
            <person name="Lazarevic D."/>
            <person name="Lipovich L."/>
            <person name="Liu J."/>
            <person name="Liuni S."/>
            <person name="McWilliam S."/>
            <person name="Madan Babu M."/>
            <person name="Madera M."/>
            <person name="Marchionni L."/>
            <person name="Matsuda H."/>
            <person name="Matsuzawa S."/>
            <person name="Miki H."/>
            <person name="Mignone F."/>
            <person name="Miyake S."/>
            <person name="Morris K."/>
            <person name="Mottagui-Tabar S."/>
            <person name="Mulder N."/>
            <person name="Nakano N."/>
            <person name="Nakauchi H."/>
            <person name="Ng P."/>
            <person name="Nilsson R."/>
            <person name="Nishiguchi S."/>
            <person name="Nishikawa S."/>
            <person name="Nori F."/>
            <person name="Ohara O."/>
            <person name="Okazaki Y."/>
            <person name="Orlando V."/>
            <person name="Pang K.C."/>
            <person name="Pavan W.J."/>
            <person name="Pavesi G."/>
            <person name="Pesole G."/>
            <person name="Petrovsky N."/>
            <person name="Piazza S."/>
            <person name="Reed J."/>
            <person name="Reid J.F."/>
            <person name="Ring B.Z."/>
            <person name="Ringwald M."/>
            <person name="Rost B."/>
            <person name="Ruan Y."/>
            <person name="Salzberg S.L."/>
            <person name="Sandelin A."/>
            <person name="Schneider C."/>
            <person name="Schoenbach C."/>
            <person name="Sekiguchi K."/>
            <person name="Semple C.A."/>
            <person name="Seno S."/>
            <person name="Sessa L."/>
            <person name="Sheng Y."/>
            <person name="Shibata Y."/>
            <person name="Shimada H."/>
            <person name="Shimada K."/>
            <person name="Silva D."/>
            <person name="Sinclair B."/>
            <person name="Sperling S."/>
            <person name="Stupka E."/>
            <person name="Sugiura K."/>
            <person name="Sultana R."/>
            <person name="Takenaka Y."/>
            <person name="Taki K."/>
            <person name="Tammoja K."/>
            <person name="Tan S.L."/>
            <person name="Tang S."/>
            <person name="Taylor M.S."/>
            <person name="Tegner J."/>
            <person name="Teichmann S.A."/>
            <person name="Ueda H.R."/>
            <person name="van Nimwegen E."/>
            <person name="Verardo R."/>
            <person name="Wei C.L."/>
            <person name="Yagi K."/>
            <person name="Yamanishi H."/>
            <person name="Zabarovsky E."/>
            <person name="Zhu S."/>
            <person name="Zimmer A."/>
            <person name="Hide W."/>
            <person name="Bult C."/>
            <person name="Grimmond S.M."/>
            <person name="Teasdale R.D."/>
            <person name="Liu E.T."/>
            <person name="Brusic V."/>
            <person name="Quackenbush J."/>
            <person name="Wahlestedt C."/>
            <person name="Mattick J.S."/>
            <person name="Hume D.A."/>
            <person name="Kai C."/>
            <person name="Sasaki D."/>
            <person name="Tomaru Y."/>
            <person name="Fukuda S."/>
            <person name="Kanamori-Katayama M."/>
            <person name="Suzuki M."/>
            <person name="Aoki J."/>
            <person name="Arakawa T."/>
            <person name="Iida J."/>
            <person name="Imamura K."/>
            <person name="Itoh M."/>
            <person name="Kato T."/>
            <person name="Kawaji H."/>
            <person name="Kawagashira N."/>
            <person name="Kawashima T."/>
            <person name="Kojima M."/>
            <person name="Kondo S."/>
            <person name="Konno H."/>
            <person name="Nakano K."/>
            <person name="Ninomiya N."/>
            <person name="Nishio T."/>
            <person name="Okada M."/>
            <person name="Plessy C."/>
            <person name="Shibata K."/>
            <person name="Shiraki T."/>
            <person name="Suzuki S."/>
            <person name="Tagami M."/>
            <person name="Waki K."/>
            <person name="Watahiki A."/>
            <person name="Okamura-Oho Y."/>
            <person name="Suzuki H."/>
            <person name="Kawai J."/>
            <person name="Hayashizaki Y."/>
        </authorList>
    </citation>
    <scope>NUCLEOTIDE SEQUENCE [LARGE SCALE MRNA] (ISOFORM 3)</scope>
    <source>
        <strain>C57BL/6J</strain>
        <tissue>Diencephalon</tissue>
    </source>
</reference>
<reference key="3">
    <citation type="journal article" date="2001" name="EMBO J.">
        <title>Tuning pacemaker frequency of individual dopaminergic neurons by Kv4.3L and KChip3.1 transcription.</title>
        <authorList>
            <person name="Liss B."/>
            <person name="Franz O."/>
            <person name="Sewing S."/>
            <person name="Bruns R."/>
            <person name="Neuhoff H."/>
            <person name="Roeper J."/>
        </authorList>
    </citation>
    <scope>INTERACTION WITH KCNIP3</scope>
</reference>
<reference key="4">
    <citation type="journal article" date="2002" name="Circ. Res.">
        <title>Role of heteromultimers in the generation of myocardial transient outward K+ currents.</title>
        <authorList>
            <person name="Guo W."/>
            <person name="Li H."/>
            <person name="Aimond F."/>
            <person name="Johns D.C."/>
            <person name="Rhodes K.J."/>
            <person name="Trimmer J.S."/>
            <person name="Nerbonne J.M."/>
        </authorList>
    </citation>
    <scope>INTERACTION WITH KCND2 AND KCNIP2</scope>
</reference>
<reference key="5">
    <citation type="journal article" date="2009" name="Channels">
        <title>Proteomic analyses of native brain K(V)4.2 channel complexes.</title>
        <authorList>
            <person name="Marionneau C."/>
            <person name="LeDuc R.D."/>
            <person name="Rohrs H.W."/>
            <person name="Link A.J."/>
            <person name="Townsend R.R."/>
            <person name="Nerbonne J.M."/>
        </authorList>
    </citation>
    <scope>SUBUNIT</scope>
    <scope>IDENTIFICATION BY MASS SPECTROMETRY</scope>
</reference>
<reference key="6">
    <citation type="journal article" date="2010" name="Cell">
        <title>A tissue-specific atlas of mouse protein phosphorylation and expression.</title>
        <authorList>
            <person name="Huttlin E.L."/>
            <person name="Jedrychowski M.P."/>
            <person name="Elias J.E."/>
            <person name="Goswami T."/>
            <person name="Rad R."/>
            <person name="Beausoleil S.A."/>
            <person name="Villen J."/>
            <person name="Haas W."/>
            <person name="Sowa M.E."/>
            <person name="Gygi S.P."/>
        </authorList>
    </citation>
    <scope>PHOSPHORYLATION [LARGE SCALE ANALYSIS] AT SER-153; THR-459; SER-569 AND SER-585</scope>
    <scope>IDENTIFICATION BY MASS SPECTROMETRY [LARGE SCALE ANALYSIS]</scope>
    <source>
        <tissue>Brain</tissue>
    </source>
</reference>
<proteinExistence type="evidence at protein level"/>
<accession>Q9Z0V1</accession>
<accession>Q8CC44</accession>
<accession>Q9Z0V0</accession>
<organism>
    <name type="scientific">Mus musculus</name>
    <name type="common">Mouse</name>
    <dbReference type="NCBI Taxonomy" id="10090"/>
    <lineage>
        <taxon>Eukaryota</taxon>
        <taxon>Metazoa</taxon>
        <taxon>Chordata</taxon>
        <taxon>Craniata</taxon>
        <taxon>Vertebrata</taxon>
        <taxon>Euteleostomi</taxon>
        <taxon>Mammalia</taxon>
        <taxon>Eutheria</taxon>
        <taxon>Euarchontoglires</taxon>
        <taxon>Glires</taxon>
        <taxon>Rodentia</taxon>
        <taxon>Myomorpha</taxon>
        <taxon>Muroidea</taxon>
        <taxon>Muridae</taxon>
        <taxon>Murinae</taxon>
        <taxon>Mus</taxon>
        <taxon>Mus</taxon>
    </lineage>
</organism>
<feature type="chain" id="PRO_0000054069" description="A-type voltage-gated potassium channel KCND3">
    <location>
        <begin position="1"/>
        <end position="655"/>
    </location>
</feature>
<feature type="topological domain" description="Cytoplasmic" evidence="5">
    <location>
        <begin position="1"/>
        <end position="182"/>
    </location>
</feature>
<feature type="transmembrane region" description="Helical; Name=Segment S1" evidence="5">
    <location>
        <begin position="183"/>
        <end position="204"/>
    </location>
</feature>
<feature type="topological domain" description="Extracellular" evidence="5">
    <location>
        <begin position="205"/>
        <end position="223"/>
    </location>
</feature>
<feature type="transmembrane region" description="Helical; Name=Segment S2" evidence="5">
    <location>
        <begin position="224"/>
        <end position="246"/>
    </location>
</feature>
<feature type="topological domain" description="Cytoplasmic" evidence="5">
    <location>
        <begin position="247"/>
        <end position="253"/>
    </location>
</feature>
<feature type="transmembrane region" description="Helical; Name=Segment S3" evidence="5">
    <location>
        <begin position="254"/>
        <end position="277"/>
    </location>
</feature>
<feature type="topological domain" description="Extracellular" evidence="5">
    <location>
        <begin position="278"/>
        <end position="283"/>
    </location>
</feature>
<feature type="transmembrane region" description="Helical; Voltage-sensor; Name=Segment S4" evidence="5">
    <location>
        <begin position="284"/>
        <end position="306"/>
    </location>
</feature>
<feature type="topological domain" description="Cytoplasmic" evidence="5">
    <location>
        <begin position="307"/>
        <end position="318"/>
    </location>
</feature>
<feature type="transmembrane region" description="Helical; Name=Segment S5" evidence="5">
    <location>
        <begin position="319"/>
        <end position="343"/>
    </location>
</feature>
<feature type="topological domain" description="Extracellular" evidence="5">
    <location>
        <begin position="344"/>
        <end position="352"/>
    </location>
</feature>
<feature type="intramembrane region" description="Helical; Name=Pore helix" evidence="5">
    <location>
        <begin position="353"/>
        <end position="366"/>
    </location>
</feature>
<feature type="intramembrane region" evidence="1">
    <location>
        <begin position="367"/>
        <end position="374"/>
    </location>
</feature>
<feature type="transmembrane region" description="Helical; Name=Segment S6" evidence="5">
    <location>
        <begin position="378"/>
        <end position="400"/>
    </location>
</feature>
<feature type="topological domain" description="Cytoplasmic" evidence="5">
    <location>
        <begin position="401"/>
        <end position="655"/>
    </location>
</feature>
<feature type="region of interest" description="Interaction with KCNIP1 and KCNIP2" evidence="5">
    <location>
        <begin position="6"/>
        <end position="21"/>
    </location>
</feature>
<feature type="region of interest" description="Interaction with KCNIP1" evidence="5">
    <location>
        <begin position="70"/>
        <end position="78"/>
    </location>
</feature>
<feature type="region of interest" description="Interaction with KCNIP1 and KCNIP2" evidence="5">
    <location>
        <begin position="470"/>
        <end position="487"/>
    </location>
</feature>
<feature type="region of interest" description="Mediates dendritic targeting" evidence="3">
    <location>
        <begin position="472"/>
        <end position="487"/>
    </location>
</feature>
<feature type="region of interest" description="Disordered" evidence="7">
    <location>
        <begin position="523"/>
        <end position="565"/>
    </location>
</feature>
<feature type="region of interest" description="Disordered" evidence="7">
    <location>
        <begin position="615"/>
        <end position="655"/>
    </location>
</feature>
<feature type="short sequence motif" description="Selectivity filter" evidence="1">
    <location>
        <begin position="367"/>
        <end position="372"/>
    </location>
</feature>
<feature type="compositionally biased region" description="Low complexity" evidence="7">
    <location>
        <begin position="529"/>
        <end position="548"/>
    </location>
</feature>
<feature type="compositionally biased region" description="Polar residues" evidence="7">
    <location>
        <begin position="637"/>
        <end position="655"/>
    </location>
</feature>
<feature type="binding site" description="in chain B" evidence="5">
    <location>
        <position position="104"/>
    </location>
    <ligand>
        <name>Zn(2+)</name>
        <dbReference type="ChEBI" id="CHEBI:29105"/>
        <note>ligand shared between homodimeric partners</note>
    </ligand>
</feature>
<feature type="binding site" description="in chain D" evidence="5">
    <location>
        <position position="110"/>
    </location>
    <ligand>
        <name>Zn(2+)</name>
        <dbReference type="ChEBI" id="CHEBI:29105"/>
        <note>ligand shared between homodimeric partners</note>
    </ligand>
</feature>
<feature type="binding site" description="in chain B" evidence="5">
    <location>
        <position position="131"/>
    </location>
    <ligand>
        <name>Zn(2+)</name>
        <dbReference type="ChEBI" id="CHEBI:29105"/>
        <note>ligand shared between homodimeric partners</note>
    </ligand>
</feature>
<feature type="binding site" description="in chain B" evidence="5">
    <location>
        <position position="132"/>
    </location>
    <ligand>
        <name>Zn(2+)</name>
        <dbReference type="ChEBI" id="CHEBI:29105"/>
        <note>ligand shared between homodimeric partners</note>
    </ligand>
</feature>
<feature type="binding site" evidence="4">
    <location>
        <position position="367"/>
    </location>
    <ligand>
        <name>K(+)</name>
        <dbReference type="ChEBI" id="CHEBI:29103"/>
        <note>ligand shared between homotetrameric partners</note>
    </ligand>
</feature>
<feature type="binding site" evidence="4">
    <location>
        <position position="368"/>
    </location>
    <ligand>
        <name>K(+)</name>
        <dbReference type="ChEBI" id="CHEBI:29103"/>
        <note>ligand shared between homotetrameric partners</note>
    </ligand>
</feature>
<feature type="binding site" evidence="4">
    <location>
        <position position="369"/>
    </location>
    <ligand>
        <name>K(+)</name>
        <dbReference type="ChEBI" id="CHEBI:29103"/>
        <note>ligand shared between homotetrameric partners</note>
    </ligand>
</feature>
<feature type="binding site" evidence="4">
    <location>
        <position position="370"/>
    </location>
    <ligand>
        <name>K(+)</name>
        <dbReference type="ChEBI" id="CHEBI:29103"/>
        <note>ligand shared between homotetrameric partners</note>
    </ligand>
</feature>
<feature type="modified residue" description="Phosphoserine" evidence="15">
    <location>
        <position position="153"/>
    </location>
</feature>
<feature type="modified residue" description="Phosphothreonine" evidence="15">
    <location>
        <position position="459"/>
    </location>
</feature>
<feature type="modified residue" description="Phosphoserine" evidence="15">
    <location>
        <position position="569"/>
    </location>
</feature>
<feature type="modified residue" description="Phosphoserine" evidence="15">
    <location>
        <position position="585"/>
    </location>
</feature>
<feature type="splice variant" id="VSP_008828" description="In isoform 3." evidence="11">
    <original>GLSYLVDDPLLSVRTSTIKNHEFIDEQMFEQNCMESSMQNYPST</original>
    <variation>VSSSLLPPPASSLTSQGCTHVIIPRRESSSVPFQSKTIVSLPLG</variation>
    <location>
        <begin position="488"/>
        <end position="531"/>
    </location>
</feature>
<feature type="splice variant" id="VSP_008827" description="In isoform 2." evidence="12">
    <location>
        <begin position="488"/>
        <end position="506"/>
    </location>
</feature>
<feature type="splice variant" id="VSP_008829" description="In isoform 3." evidence="11">
    <location>
        <begin position="532"/>
        <end position="655"/>
    </location>
</feature>
<sequence length="655" mass="73462">MAAGVAAWLPFARAAAIGWMPVANCPMPLAPADKNKRQDELIVLNVSGRRFQTWRTTLERYPDTLLGSTEKEFFFNEDTKEYFFDRDPEVFRCVLNFYRTGKLHYPRYECISAYDDELAFYGILPEIIGDCCYEEYKDRKRENAERLMDDNDSENNQESMPSLSFRQTMWRAFENPHTSTLALVFYYVTGFFIAVSVITNVVETVPCGTVPGSKELPCGERYSVAFFCLDTACVMIFTVEYLLRLFAAPSRYRFIRSVMSIIDVVAIMPYYIGLVMTNNEDVSGAFVTLRVFRVFRIFKFSRHSQGLRILGYTLKSCASELGFLLFSLTMAIIIFATVMFYAEKGSSASKFTSIPASFWYTIVTMTTLGYGDMVPKTIAGKIFGSICSLSGVLVIALPVPVIVSNFSRIYHQNQRADKRRAQKKARLARIRVAKTGSSNAYLHSKRNGLLNEALELTGTPEEEQMGKTTSLIESQHHHLLHCLEKTTGLSYLVDDPLLSVRTSTIKNHEFIDEQMFEQNCMESSMQNYPSTRSPSLSSHSGLTTTCCSRRSKKTTHLPNSNLPATRLRSMQELSTLHIQGSEQPSLTTSRSSLNLKADDGLRPNCKTSQITTAIISIPTPPALTPEGESRPPPASPGPNTNIPSITSNVVKVSAL</sequence>
<comment type="function">
    <text evidence="2 5">Pore-forming (alpha) subunit of voltage-gated A-type potassium channels that mediates transmembrane potassium transport in excitable membranes, in brain and heart (By similarity). In cardiomyocytes, may generate the transient outward potassium current I(To). In neurons, may conduct the transient subthreshold somatodendritic A-type potassium current (ISA) (By similarity). Kinetics properties are characterized by fast activation at subthreshold membrane potentials, rapid inactivation, and quick recovery from inactivation. Channel properties are modulated by interactions with regulatory subunits. Interaction with the regulatory subunits KCNIP1 or KCNIP2 modulates the channel gating kinetics namely channel activation and inactivation kinetics and rate of recovery from inactivation. Likewise, interaction with DPP6 modulates the channel gating kinetics namely channel activation and inactivation kinetics (By similarity).</text>
</comment>
<comment type="catalytic activity">
    <reaction evidence="5">
        <text>K(+)(in) = K(+)(out)</text>
        <dbReference type="Rhea" id="RHEA:29463"/>
        <dbReference type="ChEBI" id="CHEBI:29103"/>
    </reaction>
</comment>
<comment type="subunit">
    <text evidence="2 5 8 9 10">Homotetramer (By similarity). Heterotetramer with KCND2 (PubMed:11909823). Associates with the regulatory subunit KCNIP3 (PubMed:11598014). Associates with the regulatory subunit KCNIP4 (By similarity). Interacts with KCNE1, KCNE2, SCN1B and KCNAB1 and DLG1 (By similarity). Component of heteromultimeric potassium channels (PubMed:19713751). Identified in potassium channel complexes containing KCND1, KCND2, KCND3, KCNIP1, KCNIP2, KCNIP3, KCNIP4, DPP6 and DPP10 (PubMed:19713751). Interacts with KCNIP1; each KCNIP1 monomer interacts with two adjacent KCND3 subunits, through both the N-terminal inactivation ball of a KCND3 subunit and a C-terminal helix from the adjacent KCND3 subunit, clamping them together; this interaction stabilizes the tetrameric form and modulates the channel gating kinetics namely channel activation and inactivation kinetics and rate of recovery from inactivation. Interacts with DPP6; this interaction modulates the channel gating kinetics namely channel activation and inactivation kinetics and rate of recovery from inactivation (By similarity). Interacts with KCNIP2; each KCNIP2 monomer interacts with two adjacent KCND3 subunits, through both the N-terminal inactivation ball of a KCND3 subunit and a C-terminal helix from the adjacent KCND3 subunit, clamping them together; this interaction modulates the channel gating kinetics (PubMed:11909823).</text>
</comment>
<comment type="subcellular location">
    <subcellularLocation>
        <location evidence="2">Cell membrane</location>
        <topology evidence="6">Multi-pass membrane protein</topology>
    </subcellularLocation>
    <subcellularLocation>
        <location evidence="2">Cell membrane</location>
        <location evidence="2">Sarcolemma</location>
        <topology evidence="6">Multi-pass membrane protein</topology>
    </subcellularLocation>
    <subcellularLocation>
        <location evidence="2">Cell projection</location>
        <location evidence="2">Dendrite</location>
    </subcellularLocation>
    <text evidence="2">Interaction with palmitoylated KCNIP2 and KCNIP3 enhances cell surface expression.</text>
</comment>
<comment type="alternative products">
    <event type="alternative splicing"/>
    <isoform>
        <id>Q9Z0V1-1</id>
        <name>1</name>
        <name>Kv4.3L</name>
        <sequence type="displayed"/>
    </isoform>
    <isoform>
        <id>Q9Z0V1-2</id>
        <name>2</name>
        <name>Kv4.3M</name>
        <sequence type="described" ref="VSP_008827"/>
    </isoform>
    <isoform>
        <id>Q9Z0V1-3</id>
        <name>3</name>
        <sequence type="described" ref="VSP_008828 VSP_008829"/>
    </isoform>
</comment>
<comment type="domain">
    <text evidence="5">Two N-terminal domains regulate binding to and modulation by KCNIP1.</text>
</comment>
<comment type="PTM">
    <text evidence="2">Regulated through phosphorylation at Ser-569 by CaMK2D.</text>
</comment>
<comment type="miscellaneous">
    <molecule>Isoform 3</molecule>
    <text evidence="13">May be due to intron retention.</text>
</comment>
<comment type="similarity">
    <text evidence="13">Belongs to the potassium channel family. D (Shal) (TC 1.A.1.2) subfamily. Kv4.3/KCND3 sub-subfamily.</text>
</comment>
<name>KCND3_MOUSE</name>
<evidence type="ECO:0000250" key="1">
    <source>
        <dbReference type="UniProtKB" id="P63142"/>
    </source>
</evidence>
<evidence type="ECO:0000250" key="2">
    <source>
        <dbReference type="UniProtKB" id="Q62897"/>
    </source>
</evidence>
<evidence type="ECO:0000250" key="3">
    <source>
        <dbReference type="UniProtKB" id="Q63881"/>
    </source>
</evidence>
<evidence type="ECO:0000250" key="4">
    <source>
        <dbReference type="UniProtKB" id="Q9NZV8"/>
    </source>
</evidence>
<evidence type="ECO:0000250" key="5">
    <source>
        <dbReference type="UniProtKB" id="Q9UK17"/>
    </source>
</evidence>
<evidence type="ECO:0000255" key="6"/>
<evidence type="ECO:0000256" key="7">
    <source>
        <dbReference type="SAM" id="MobiDB-lite"/>
    </source>
</evidence>
<evidence type="ECO:0000269" key="8">
    <source>
    </source>
</evidence>
<evidence type="ECO:0000269" key="9">
    <source>
    </source>
</evidence>
<evidence type="ECO:0000269" key="10">
    <source>
    </source>
</evidence>
<evidence type="ECO:0000303" key="11">
    <source>
    </source>
</evidence>
<evidence type="ECO:0000303" key="12">
    <source ref="1"/>
</evidence>
<evidence type="ECO:0000305" key="13"/>
<evidence type="ECO:0000312" key="14">
    <source>
        <dbReference type="MGI" id="MGI:1928743"/>
    </source>
</evidence>
<evidence type="ECO:0007744" key="15">
    <source>
    </source>
</evidence>